<organism>
    <name type="scientific">Bos taurus</name>
    <name type="common">Bovine</name>
    <dbReference type="NCBI Taxonomy" id="9913"/>
    <lineage>
        <taxon>Eukaryota</taxon>
        <taxon>Metazoa</taxon>
        <taxon>Chordata</taxon>
        <taxon>Craniata</taxon>
        <taxon>Vertebrata</taxon>
        <taxon>Euteleostomi</taxon>
        <taxon>Mammalia</taxon>
        <taxon>Eutheria</taxon>
        <taxon>Laurasiatheria</taxon>
        <taxon>Artiodactyla</taxon>
        <taxon>Ruminantia</taxon>
        <taxon>Pecora</taxon>
        <taxon>Bovidae</taxon>
        <taxon>Bovinae</taxon>
        <taxon>Bos</taxon>
    </lineage>
</organism>
<dbReference type="EC" id="2.7.8.5"/>
<dbReference type="EMBL" id="BC105551">
    <property type="status" value="NOT_ANNOTATED_CDS"/>
    <property type="molecule type" value="mRNA"/>
</dbReference>
<dbReference type="RefSeq" id="NP_001039860.2">
    <property type="nucleotide sequence ID" value="NM_001046395.2"/>
</dbReference>
<dbReference type="RefSeq" id="XP_005221295.1">
    <property type="nucleotide sequence ID" value="XM_005221238.3"/>
</dbReference>
<dbReference type="RefSeq" id="XP_005221296.1">
    <property type="nucleotide sequence ID" value="XM_005221239.4"/>
</dbReference>
<dbReference type="RefSeq" id="XP_005221297.1">
    <property type="nucleotide sequence ID" value="XM_005221240.4"/>
</dbReference>
<dbReference type="RefSeq" id="XP_005221298.1">
    <property type="nucleotide sequence ID" value="XM_005221241.4"/>
</dbReference>
<dbReference type="RefSeq" id="XP_005221299.1">
    <property type="nucleotide sequence ID" value="XM_005221242.4"/>
</dbReference>
<dbReference type="RefSeq" id="XP_010814866.1">
    <property type="nucleotide sequence ID" value="XM_010816564.2"/>
</dbReference>
<dbReference type="RefSeq" id="XP_015314464.1">
    <property type="nucleotide sequence ID" value="XM_015458978.1"/>
</dbReference>
<dbReference type="RefSeq" id="XP_015314465.1">
    <property type="nucleotide sequence ID" value="XM_015458979.1"/>
</dbReference>
<dbReference type="RefSeq" id="XP_059734133.1">
    <property type="nucleotide sequence ID" value="XM_059878150.1"/>
</dbReference>
<dbReference type="RefSeq" id="XP_059734134.1">
    <property type="nucleotide sequence ID" value="XM_059878151.1"/>
</dbReference>
<dbReference type="RefSeq" id="XP_059734135.1">
    <property type="nucleotide sequence ID" value="XM_059878152.1"/>
</dbReference>
<dbReference type="SMR" id="Q2KJ28"/>
<dbReference type="FunCoup" id="Q2KJ28">
    <property type="interactions" value="3076"/>
</dbReference>
<dbReference type="STRING" id="9913.ENSBTAP00000000897"/>
<dbReference type="PaxDb" id="9913-ENSBTAP00000000897"/>
<dbReference type="GeneID" id="535126"/>
<dbReference type="KEGG" id="bta:535126"/>
<dbReference type="CTD" id="9489"/>
<dbReference type="VEuPathDB" id="HostDB:ENSBTAG00000000675"/>
<dbReference type="eggNOG" id="KOG3964">
    <property type="taxonomic scope" value="Eukaryota"/>
</dbReference>
<dbReference type="HOGENOM" id="CLU_030471_1_2_1"/>
<dbReference type="InParanoid" id="Q2KJ28"/>
<dbReference type="OMA" id="HKCLAQC"/>
<dbReference type="OrthoDB" id="286107at2759"/>
<dbReference type="TreeFam" id="TF314768"/>
<dbReference type="UniPathway" id="UPA00084">
    <property type="reaction ID" value="UER00503"/>
</dbReference>
<dbReference type="Proteomes" id="UP000009136">
    <property type="component" value="Chromosome 19"/>
</dbReference>
<dbReference type="Bgee" id="ENSBTAG00000000675">
    <property type="expression patterns" value="Expressed in neutrophil and 104 other cell types or tissues"/>
</dbReference>
<dbReference type="GO" id="GO:0005739">
    <property type="term" value="C:mitochondrion"/>
    <property type="evidence" value="ECO:0000318"/>
    <property type="project" value="GO_Central"/>
</dbReference>
<dbReference type="GO" id="GO:0005524">
    <property type="term" value="F:ATP binding"/>
    <property type="evidence" value="ECO:0007669"/>
    <property type="project" value="UniProtKB-KW"/>
</dbReference>
<dbReference type="GO" id="GO:0008444">
    <property type="term" value="F:CDP-diacylglycerol-glycerol-3-phosphate 3-phosphatidyltransferase activity"/>
    <property type="evidence" value="ECO:0000318"/>
    <property type="project" value="GO_Central"/>
</dbReference>
<dbReference type="GO" id="GO:0032049">
    <property type="term" value="P:cardiolipin biosynthetic process"/>
    <property type="evidence" value="ECO:0000318"/>
    <property type="project" value="GO_Central"/>
</dbReference>
<dbReference type="CDD" id="cd09135">
    <property type="entry name" value="PLDc_PGS1_euk_1"/>
    <property type="match status" value="1"/>
</dbReference>
<dbReference type="CDD" id="cd09137">
    <property type="entry name" value="PLDc_PGS1_euk_2"/>
    <property type="match status" value="1"/>
</dbReference>
<dbReference type="FunFam" id="3.30.870.10:FF:000023">
    <property type="entry name" value="CDP-diacylglycerol--glycerol-3-phosphate 3-phosphatidyltransferase"/>
    <property type="match status" value="1"/>
</dbReference>
<dbReference type="FunFam" id="3.30.870.10:FF:000026">
    <property type="entry name" value="CDP-diacylglycerol--glycerol-3-phosphate 3-phosphatidyltransferase"/>
    <property type="match status" value="1"/>
</dbReference>
<dbReference type="Gene3D" id="3.30.870.10">
    <property type="entry name" value="Endonuclease Chain A"/>
    <property type="match status" value="2"/>
</dbReference>
<dbReference type="InterPro" id="IPR016270">
    <property type="entry name" value="PGS1"/>
</dbReference>
<dbReference type="InterPro" id="IPR001736">
    <property type="entry name" value="PLipase_D/transphosphatidylase"/>
</dbReference>
<dbReference type="PANTHER" id="PTHR12586:SF1">
    <property type="entry name" value="CDP-DIACYLGLYCEROL--GLYCEROL-3-PHOSPHATE 3-PHOSPHATIDYLTRANSFERASE, MITOCHONDRIAL"/>
    <property type="match status" value="1"/>
</dbReference>
<dbReference type="PANTHER" id="PTHR12586">
    <property type="entry name" value="CDP-DIACYLGLYCEROL--SERINE O-PHOSPHATIDYLTRANSFERASE"/>
    <property type="match status" value="1"/>
</dbReference>
<dbReference type="PIRSF" id="PIRSF000850">
    <property type="entry name" value="Phospholipase_D_PSS"/>
    <property type="match status" value="1"/>
</dbReference>
<dbReference type="SUPFAM" id="SSF56024">
    <property type="entry name" value="Phospholipase D/nuclease"/>
    <property type="match status" value="2"/>
</dbReference>
<dbReference type="PROSITE" id="PS50035">
    <property type="entry name" value="PLD"/>
    <property type="match status" value="1"/>
</dbReference>
<comment type="function">
    <text evidence="1">Functions in the biosynthesis of the anionic phospholipids phosphatidylglycerol and cardiolipin.</text>
</comment>
<comment type="catalytic activity">
    <reaction>
        <text>a CDP-1,2-diacyl-sn-glycerol + sn-glycerol 3-phosphate = a 1,2-diacyl-sn-glycero-3-phospho-(1'-sn-glycero-3'-phosphate) + CMP + H(+)</text>
        <dbReference type="Rhea" id="RHEA:12593"/>
        <dbReference type="ChEBI" id="CHEBI:15378"/>
        <dbReference type="ChEBI" id="CHEBI:57597"/>
        <dbReference type="ChEBI" id="CHEBI:58332"/>
        <dbReference type="ChEBI" id="CHEBI:60110"/>
        <dbReference type="ChEBI" id="CHEBI:60377"/>
        <dbReference type="EC" id="2.7.8.5"/>
    </reaction>
</comment>
<comment type="activity regulation">
    <text evidence="1">Activated by calcium and magnesium and inhibited by other bivalent cations.</text>
</comment>
<comment type="pathway">
    <text>Phospholipid metabolism; phosphatidylglycerol biosynthesis; phosphatidylglycerol from CDP-diacylglycerol: step 1/2.</text>
</comment>
<comment type="subcellular location">
    <subcellularLocation>
        <location evidence="1">Mitochondrion</location>
    </subcellularLocation>
</comment>
<comment type="similarity">
    <text evidence="5">Belongs to the CDP-alcohol phosphatidyltransferase class-II family.</text>
</comment>
<comment type="sequence caution" evidence="5">
    <conflict type="frameshift">
        <sequence resource="EMBL" id="BC105551"/>
    </conflict>
</comment>
<proteinExistence type="evidence at transcript level"/>
<gene>
    <name type="primary">PGS1</name>
</gene>
<sequence length="556" mass="62732">MAAAAAAAAGPVFWRRLLGLLPGRPGLAALLGRLSDRLGRNPDRRRRRSPWLLLAPLLSPAVPVVTSPPCCLCAEGVHRFQWIRNLVPEFGVSSSHVRVLSSPAEFFELMKGQIKVAKRRVVMASLYLGIGPLEQELVDCLESTLEKSLQAKFPSGLRVSILLDFTRGSRGRKNSRTMLLPLLQRFPEQVRVSLFHTPNLRGLLRLLIPERFNETIGLQHIKVYLFDNNVILSGANLSDSYFTNRQDRYVFLQDCPEIADFFTELVDAVGDVSLQLQGDDTVQMVEGMVHPYKGDRAAYCRAANKRVMDVINSARMRQQMLHAQTFHSDPLLTQEDAAAAGDRRPAPDTWIYPLIQMKPFEIQIDEIVTETLLTEAERGAKVYLTTGYFNLTQAYMDLVLGTRAEYQILLASPEVNGFFGAKGVAGAIPAAYVHIERQFYSEVCSLGQQERVQLQEYWRRDWTFHAKGLWLYLAGSSLPCLTLIGSPNFGYRSVHRDLEAQIAIVTESRALQQQLHQEQEQLYRRAGVVSSATFEQPSRQVKLWVKMVTPLIKNFF</sequence>
<protein>
    <recommendedName>
        <fullName>CDP-diacylglycerol--glycerol-3-phosphate 3-phosphatidyltransferase, mitochondrial</fullName>
        <ecNumber>2.7.8.5</ecNumber>
    </recommendedName>
    <alternativeName>
        <fullName>Phosphatidylglycerophosphate synthase 1</fullName>
        <shortName>PGP synthase 1</shortName>
    </alternativeName>
</protein>
<reference key="1">
    <citation type="submission" date="2005-09" db="EMBL/GenBank/DDBJ databases">
        <authorList>
            <consortium name="NIH - Mammalian Gene Collection (MGC) project"/>
        </authorList>
    </citation>
    <scope>NUCLEOTIDE SEQUENCE [LARGE SCALE MRNA]</scope>
    <source>
        <strain>Hereford</strain>
        <tissue>Ascending colon</tissue>
    </source>
</reference>
<feature type="transit peptide" description="Mitochondrion" evidence="3">
    <location>
        <begin position="1"/>
        <end position="28"/>
    </location>
</feature>
<feature type="chain" id="PRO_0000337104" description="CDP-diacylglycerol--glycerol-3-phosphate 3-phosphatidyltransferase, mitochondrial">
    <location>
        <begin position="29"/>
        <end position="556"/>
    </location>
</feature>
<feature type="domain" description="PLD phosphodiesterase 1" evidence="4">
    <location>
        <begin position="215"/>
        <end position="241"/>
    </location>
</feature>
<feature type="domain" description="PLD phosphodiesterase 2" evidence="4">
    <location>
        <begin position="419"/>
        <end position="457"/>
    </location>
</feature>
<feature type="active site" evidence="4">
    <location>
        <position position="220"/>
    </location>
</feature>
<feature type="active site" evidence="4">
    <location>
        <position position="222"/>
    </location>
</feature>
<feature type="active site" evidence="4">
    <location>
        <position position="227"/>
    </location>
</feature>
<feature type="binding site" evidence="3">
    <location>
        <begin position="124"/>
        <end position="131"/>
    </location>
    <ligand>
        <name>ATP</name>
        <dbReference type="ChEBI" id="CHEBI:30616"/>
    </ligand>
</feature>
<feature type="modified residue" description="Phosphoserine" evidence="2">
    <location>
        <position position="49"/>
    </location>
</feature>
<evidence type="ECO:0000250" key="1"/>
<evidence type="ECO:0000250" key="2">
    <source>
        <dbReference type="UniProtKB" id="Q8BHF7"/>
    </source>
</evidence>
<evidence type="ECO:0000255" key="3"/>
<evidence type="ECO:0000255" key="4">
    <source>
        <dbReference type="PROSITE-ProRule" id="PRU00153"/>
    </source>
</evidence>
<evidence type="ECO:0000305" key="5"/>
<name>PGPS1_BOVIN</name>
<accession>Q2KJ28</accession>
<keyword id="KW-0067">ATP-binding</keyword>
<keyword id="KW-0444">Lipid biosynthesis</keyword>
<keyword id="KW-0443">Lipid metabolism</keyword>
<keyword id="KW-0496">Mitochondrion</keyword>
<keyword id="KW-0547">Nucleotide-binding</keyword>
<keyword id="KW-0594">Phospholipid biosynthesis</keyword>
<keyword id="KW-1208">Phospholipid metabolism</keyword>
<keyword id="KW-0597">Phosphoprotein</keyword>
<keyword id="KW-1185">Reference proteome</keyword>
<keyword id="KW-0677">Repeat</keyword>
<keyword id="KW-0808">Transferase</keyword>
<keyword id="KW-0809">Transit peptide</keyword>